<dbReference type="EMBL" id="S82652">
    <property type="protein sequence ID" value="AAB46746.2"/>
    <property type="molecule type" value="mRNA"/>
</dbReference>
<dbReference type="EMBL" id="BT021201">
    <property type="protein sequence ID" value="AAX31383.1"/>
    <property type="molecule type" value="mRNA"/>
</dbReference>
<dbReference type="EMBL" id="BC118460">
    <property type="protein sequence ID" value="AAI18461.1"/>
    <property type="molecule type" value="mRNA"/>
</dbReference>
<dbReference type="PIR" id="S32559">
    <property type="entry name" value="S32559"/>
</dbReference>
<dbReference type="RefSeq" id="NP_847888.2">
    <property type="nucleotide sequence ID" value="NM_178318.4"/>
</dbReference>
<dbReference type="RefSeq" id="XP_005227715.1">
    <property type="nucleotide sequence ID" value="XM_005227658.5"/>
</dbReference>
<dbReference type="PDB" id="2FT3">
    <property type="method" value="X-ray"/>
    <property type="resolution" value="3.40 A"/>
    <property type="chains" value="A/B/C/D/E/F=38-369"/>
</dbReference>
<dbReference type="PDBsum" id="2FT3"/>
<dbReference type="SMR" id="P21809"/>
<dbReference type="FunCoup" id="P21809">
    <property type="interactions" value="362"/>
</dbReference>
<dbReference type="IntAct" id="P21809">
    <property type="interactions" value="4"/>
</dbReference>
<dbReference type="STRING" id="9913.ENSBTAP00000044462"/>
<dbReference type="GlyCosmos" id="P21809">
    <property type="glycosylation" value="6 sites, No reported glycans"/>
</dbReference>
<dbReference type="GlyGen" id="P21809">
    <property type="glycosylation" value="6 sites"/>
</dbReference>
<dbReference type="iPTMnet" id="P21809"/>
<dbReference type="PaxDb" id="9913-ENSBTAP00000044462"/>
<dbReference type="PeptideAtlas" id="P21809"/>
<dbReference type="GeneID" id="280733"/>
<dbReference type="KEGG" id="bta:280733"/>
<dbReference type="CTD" id="633"/>
<dbReference type="VEuPathDB" id="HostDB:ENSBTAG00000005250"/>
<dbReference type="eggNOG" id="KOG0619">
    <property type="taxonomic scope" value="Eukaryota"/>
</dbReference>
<dbReference type="HOGENOM" id="CLU_000288_186_0_1"/>
<dbReference type="InParanoid" id="P21809"/>
<dbReference type="OMA" id="VEMRIHE"/>
<dbReference type="OrthoDB" id="1111193at2759"/>
<dbReference type="TreeFam" id="TF334562"/>
<dbReference type="Reactome" id="R-BTA-1971475">
    <property type="pathway name" value="A tetrasaccharide linker sequence is required for GAG synthesis"/>
</dbReference>
<dbReference type="Reactome" id="R-BTA-2022870">
    <property type="pathway name" value="Chondroitin sulfate biosynthesis"/>
</dbReference>
<dbReference type="Reactome" id="R-BTA-2022923">
    <property type="pathway name" value="Dermatan sulfate biosynthesis"/>
</dbReference>
<dbReference type="Reactome" id="R-BTA-2024101">
    <property type="pathway name" value="CS/DS degradation"/>
</dbReference>
<dbReference type="Reactome" id="R-BTA-3000178">
    <property type="pathway name" value="ECM proteoglycans"/>
</dbReference>
<dbReference type="EvolutionaryTrace" id="P21809"/>
<dbReference type="Proteomes" id="UP000009136">
    <property type="component" value="Chromosome X"/>
</dbReference>
<dbReference type="Bgee" id="ENSBTAG00000005250">
    <property type="expression patterns" value="Expressed in trachea and 104 other cell types or tissues"/>
</dbReference>
<dbReference type="GO" id="GO:0009986">
    <property type="term" value="C:cell surface"/>
    <property type="evidence" value="ECO:0007669"/>
    <property type="project" value="Ensembl"/>
</dbReference>
<dbReference type="GO" id="GO:0031012">
    <property type="term" value="C:extracellular matrix"/>
    <property type="evidence" value="ECO:0007669"/>
    <property type="project" value="Ensembl"/>
</dbReference>
<dbReference type="GO" id="GO:0005576">
    <property type="term" value="C:extracellular region"/>
    <property type="evidence" value="ECO:0000304"/>
    <property type="project" value="Reactome"/>
</dbReference>
<dbReference type="GO" id="GO:0005615">
    <property type="term" value="C:extracellular space"/>
    <property type="evidence" value="ECO:0000318"/>
    <property type="project" value="GO_Central"/>
</dbReference>
<dbReference type="GO" id="GO:0042383">
    <property type="term" value="C:sarcolemma"/>
    <property type="evidence" value="ECO:0007669"/>
    <property type="project" value="Ensembl"/>
</dbReference>
<dbReference type="GO" id="GO:0030133">
    <property type="term" value="C:transport vesicle"/>
    <property type="evidence" value="ECO:0000250"/>
    <property type="project" value="AgBase"/>
</dbReference>
<dbReference type="GO" id="GO:0019955">
    <property type="term" value="F:cytokine binding"/>
    <property type="evidence" value="ECO:0007669"/>
    <property type="project" value="Ensembl"/>
</dbReference>
<dbReference type="GO" id="GO:0050840">
    <property type="term" value="F:extracellular matrix binding"/>
    <property type="evidence" value="ECO:0007669"/>
    <property type="project" value="Ensembl"/>
</dbReference>
<dbReference type="GO" id="GO:0005539">
    <property type="term" value="F:glycosaminoglycan binding"/>
    <property type="evidence" value="ECO:0007669"/>
    <property type="project" value="Ensembl"/>
</dbReference>
<dbReference type="GO" id="GO:0061975">
    <property type="term" value="P:articular cartilage development"/>
    <property type="evidence" value="ECO:0007669"/>
    <property type="project" value="Ensembl"/>
</dbReference>
<dbReference type="GO" id="GO:0060348">
    <property type="term" value="P:bone development"/>
    <property type="evidence" value="ECO:0007669"/>
    <property type="project" value="Ensembl"/>
</dbReference>
<dbReference type="FunFam" id="3.80.10.10:FF:000038">
    <property type="entry name" value="Biglycan"/>
    <property type="match status" value="1"/>
</dbReference>
<dbReference type="Gene3D" id="3.80.10.10">
    <property type="entry name" value="Ribonuclease Inhibitor"/>
    <property type="match status" value="1"/>
</dbReference>
<dbReference type="InterPro" id="IPR001611">
    <property type="entry name" value="Leu-rich_rpt"/>
</dbReference>
<dbReference type="InterPro" id="IPR003591">
    <property type="entry name" value="Leu-rich_rpt_typical-subtyp"/>
</dbReference>
<dbReference type="InterPro" id="IPR032675">
    <property type="entry name" value="LRR_dom_sf"/>
</dbReference>
<dbReference type="InterPro" id="IPR000372">
    <property type="entry name" value="LRRNT"/>
</dbReference>
<dbReference type="InterPro" id="IPR050333">
    <property type="entry name" value="SLRP"/>
</dbReference>
<dbReference type="InterPro" id="IPR016352">
    <property type="entry name" value="SLRP_I_decor/aspor/byglycan"/>
</dbReference>
<dbReference type="PANTHER" id="PTHR45712">
    <property type="entry name" value="AGAP008170-PA"/>
    <property type="match status" value="1"/>
</dbReference>
<dbReference type="PANTHER" id="PTHR45712:SF11">
    <property type="entry name" value="BIGLYCAN"/>
    <property type="match status" value="1"/>
</dbReference>
<dbReference type="Pfam" id="PF13855">
    <property type="entry name" value="LRR_8"/>
    <property type="match status" value="3"/>
</dbReference>
<dbReference type="Pfam" id="PF01462">
    <property type="entry name" value="LRRNT"/>
    <property type="match status" value="1"/>
</dbReference>
<dbReference type="PIRSF" id="PIRSF002490">
    <property type="entry name" value="SLRP_I"/>
    <property type="match status" value="1"/>
</dbReference>
<dbReference type="SMART" id="SM00364">
    <property type="entry name" value="LRR_BAC"/>
    <property type="match status" value="3"/>
</dbReference>
<dbReference type="SMART" id="SM00369">
    <property type="entry name" value="LRR_TYP"/>
    <property type="match status" value="8"/>
</dbReference>
<dbReference type="SMART" id="SM00013">
    <property type="entry name" value="LRRNT"/>
    <property type="match status" value="1"/>
</dbReference>
<dbReference type="SUPFAM" id="SSF52058">
    <property type="entry name" value="L domain-like"/>
    <property type="match status" value="1"/>
</dbReference>
<dbReference type="PROSITE" id="PS51450">
    <property type="entry name" value="LRR"/>
    <property type="match status" value="8"/>
</dbReference>
<sequence>MWPLWPLAALLALSQALPFEQKAFWDFTLDDGLPMLNDEEASGAETTSGIPDLDSLPPTYSAMCPFGCHCHLRVVQCSDLGLKAVPKEISPDTTLLDLQNNDISELRKDDFKGLQHLYALVLVNNKISKIHEKAFSPLRKLQKLYISKNHLVEIPPNLPSSLVELRIHDNRIRKVPKGVFSGLRNMNCIEMGGNPLENSGFEPGAFDGLKLNYLRISEAKLTGIPKDLPETLNELHLDHNKIQAIELEDLLRYSKLYRLGLGHNQIRMIENGSLSFLPTLRELHLDNNKLSRVPAGLPDLKLLQVVYLHTNNITKVGVNDFCPVGFGVKRAYYNGISLFNNPVPYWEVQPATFRCVTDRLAIQFGNYKK</sequence>
<proteinExistence type="evidence at protein level"/>
<organism>
    <name type="scientific">Bos taurus</name>
    <name type="common">Bovine</name>
    <dbReference type="NCBI Taxonomy" id="9913"/>
    <lineage>
        <taxon>Eukaryota</taxon>
        <taxon>Metazoa</taxon>
        <taxon>Chordata</taxon>
        <taxon>Craniata</taxon>
        <taxon>Vertebrata</taxon>
        <taxon>Euteleostomi</taxon>
        <taxon>Mammalia</taxon>
        <taxon>Eutheria</taxon>
        <taxon>Laurasiatheria</taxon>
        <taxon>Artiodactyla</taxon>
        <taxon>Ruminantia</taxon>
        <taxon>Pecora</taxon>
        <taxon>Bovidae</taxon>
        <taxon>Bovinae</taxon>
        <taxon>Bos</taxon>
    </lineage>
</organism>
<accession>P21809</accession>
<accession>P79259</accession>
<accession>Q17QB0</accession>
<accession>Q5BIM3</accession>
<gene>
    <name type="primary">BGN</name>
</gene>
<keyword id="KW-0002">3D-structure</keyword>
<keyword id="KW-0903">Direct protein sequencing</keyword>
<keyword id="KW-1015">Disulfide bond</keyword>
<keyword id="KW-0272">Extracellular matrix</keyword>
<keyword id="KW-0325">Glycoprotein</keyword>
<keyword id="KW-0433">Leucine-rich repeat</keyword>
<keyword id="KW-0654">Proteoglycan</keyword>
<keyword id="KW-1185">Reference proteome</keyword>
<keyword id="KW-0677">Repeat</keyword>
<keyword id="KW-0964">Secreted</keyword>
<keyword id="KW-0732">Signal</keyword>
<evidence type="ECO:0000250" key="1">
    <source>
        <dbReference type="UniProtKB" id="P47853"/>
    </source>
</evidence>
<evidence type="ECO:0000255" key="2"/>
<evidence type="ECO:0000269" key="3">
    <source>
    </source>
</evidence>
<evidence type="ECO:0000269" key="4">
    <source>
    </source>
</evidence>
<evidence type="ECO:0000269" key="5">
    <source>
    </source>
</evidence>
<evidence type="ECO:0000305" key="6"/>
<evidence type="ECO:0007829" key="7">
    <source>
        <dbReference type="PDB" id="2FT3"/>
    </source>
</evidence>
<name>PGS1_BOVIN</name>
<comment type="function">
    <text>May be involved in collagen fiber assembly.</text>
</comment>
<comment type="subunit">
    <text evidence="3">Homodimer. Forms a ternary complex with MFAP2 and ELN.</text>
</comment>
<comment type="subcellular location">
    <subcellularLocation>
        <location>Secreted</location>
        <location>Extracellular space</location>
        <location>Extracellular matrix</location>
    </subcellularLocation>
</comment>
<comment type="tissue specificity">
    <text>Found in several connective tissues, especially in articular cartilages.</text>
</comment>
<comment type="PTM">
    <text>The two attached glycosaminoglycan chains can be either chondroitin sulfate or dermatan sulfate.</text>
</comment>
<comment type="similarity">
    <text evidence="6">Belongs to the small leucine-rich proteoglycan (SLRP) family. SLRP class I subfamily.</text>
</comment>
<feature type="signal peptide" evidence="1">
    <location>
        <begin position="1"/>
        <end position="16"/>
    </location>
</feature>
<feature type="propeptide" id="PRO_0000032685" evidence="4 5">
    <location>
        <begin position="17"/>
        <end position="37"/>
    </location>
</feature>
<feature type="chain" id="PRO_0000032686" description="Biglycan">
    <location>
        <begin position="38"/>
        <end position="369"/>
    </location>
</feature>
<feature type="repeat" description="LRR 1">
    <location>
        <begin position="83"/>
        <end position="103"/>
    </location>
</feature>
<feature type="repeat" description="LRR 2">
    <location>
        <begin position="104"/>
        <end position="127"/>
    </location>
</feature>
<feature type="repeat" description="LRR 3">
    <location>
        <begin position="128"/>
        <end position="151"/>
    </location>
</feature>
<feature type="repeat" description="LRR 4">
    <location>
        <begin position="152"/>
        <end position="172"/>
    </location>
</feature>
<feature type="repeat" description="LRR 5">
    <location>
        <begin position="173"/>
        <end position="196"/>
    </location>
</feature>
<feature type="repeat" description="LRR 6">
    <location>
        <begin position="197"/>
        <end position="221"/>
    </location>
</feature>
<feature type="repeat" description="LRR 7">
    <location>
        <begin position="222"/>
        <end position="242"/>
    </location>
</feature>
<feature type="repeat" description="LRR 8">
    <location>
        <begin position="243"/>
        <end position="266"/>
    </location>
</feature>
<feature type="repeat" description="LRR 9">
    <location>
        <begin position="267"/>
        <end position="290"/>
    </location>
</feature>
<feature type="repeat" description="LRR 10">
    <location>
        <begin position="291"/>
        <end position="313"/>
    </location>
</feature>
<feature type="repeat" description="LRR 11">
    <location>
        <begin position="314"/>
        <end position="343"/>
    </location>
</feature>
<feature type="repeat" description="LRR 12">
    <location>
        <begin position="344"/>
        <end position="369"/>
    </location>
</feature>
<feature type="glycosylation site" description="O-linked (Xyl...) (glycosaminoglycan) serine" evidence="4 5">
    <location>
        <position position="42"/>
    </location>
</feature>
<feature type="glycosylation site" description="O-linked (Xyl...) (glycosaminoglycan) serine" evidence="4 5">
    <location>
        <position position="48"/>
    </location>
</feature>
<feature type="glycosylation site" description="O-linked (Xyl...) (glycosaminoglycan) serine" evidence="2">
    <location>
        <position position="181"/>
    </location>
</feature>
<feature type="glycosylation site" description="O-linked (Xyl...) (glycosaminoglycan) serine" evidence="2">
    <location>
        <position position="199"/>
    </location>
</feature>
<feature type="glycosylation site" description="N-linked (GlcNAc...) asparagine">
    <location>
        <position position="271"/>
    </location>
</feature>
<feature type="glycosylation site" description="N-linked (GlcNAc...) asparagine" evidence="3">
    <location>
        <position position="312"/>
    </location>
</feature>
<feature type="disulfide bond" evidence="3">
    <location>
        <begin position="64"/>
        <end position="70"/>
    </location>
</feature>
<feature type="disulfide bond" evidence="3">
    <location>
        <begin position="68"/>
        <end position="77"/>
    </location>
</feature>
<feature type="disulfide bond" evidence="3">
    <location>
        <begin position="322"/>
        <end position="355"/>
    </location>
</feature>
<feature type="sequence conflict" description="In Ref. 1; AAB46746." evidence="6" ref="1">
    <original>V</original>
    <variation>C</variation>
    <location>
        <position position="152"/>
    </location>
</feature>
<feature type="sequence conflict" description="In Ref. 4; AA sequence." evidence="6" ref="4">
    <original>C</original>
    <variation>E</variation>
    <location>
        <position position="188"/>
    </location>
</feature>
<feature type="sequence conflict" description="In Ref. 1; AAB46746." evidence="6" ref="1">
    <original>R</original>
    <variation>A</variation>
    <location>
        <position position="354"/>
    </location>
</feature>
<feature type="sequence conflict" description="In Ref. 4; AA sequence." evidence="6" ref="4">
    <original>KK</original>
    <variation>Y</variation>
    <location>
        <begin position="368"/>
        <end position="369"/>
    </location>
</feature>
<feature type="strand" evidence="7">
    <location>
        <begin position="69"/>
        <end position="71"/>
    </location>
</feature>
<feature type="strand" evidence="7">
    <location>
        <begin position="74"/>
        <end position="76"/>
    </location>
</feature>
<feature type="strand" evidence="7">
    <location>
        <begin position="95"/>
        <end position="97"/>
    </location>
</feature>
<feature type="turn" evidence="7">
    <location>
        <begin position="108"/>
        <end position="113"/>
    </location>
</feature>
<feature type="strand" evidence="7">
    <location>
        <begin position="119"/>
        <end position="121"/>
    </location>
</feature>
<feature type="helix" evidence="7">
    <location>
        <begin position="132"/>
        <end position="134"/>
    </location>
</feature>
<feature type="strand" evidence="7">
    <location>
        <begin position="143"/>
        <end position="145"/>
    </location>
</feature>
<feature type="strand" evidence="7">
    <location>
        <begin position="164"/>
        <end position="166"/>
    </location>
</feature>
<feature type="helix" evidence="7">
    <location>
        <begin position="178"/>
        <end position="180"/>
    </location>
</feature>
<feature type="strand" evidence="7">
    <location>
        <begin position="188"/>
        <end position="190"/>
    </location>
</feature>
<feature type="helix" evidence="7">
    <location>
        <begin position="198"/>
        <end position="200"/>
    </location>
</feature>
<feature type="strand" evidence="7">
    <location>
        <begin position="218"/>
        <end position="220"/>
    </location>
</feature>
<feature type="strand" evidence="7">
    <location>
        <begin position="226"/>
        <end position="228"/>
    </location>
</feature>
<feature type="helix" evidence="7">
    <location>
        <begin position="273"/>
        <end position="276"/>
    </location>
</feature>
<feature type="strand" evidence="7">
    <location>
        <begin position="282"/>
        <end position="284"/>
    </location>
</feature>
<feature type="helix" evidence="7">
    <location>
        <begin position="297"/>
        <end position="299"/>
    </location>
</feature>
<feature type="strand" evidence="7">
    <location>
        <begin position="305"/>
        <end position="307"/>
    </location>
</feature>
<feature type="strand" evidence="7">
    <location>
        <begin position="320"/>
        <end position="322"/>
    </location>
</feature>
<feature type="strand" evidence="7">
    <location>
        <begin position="328"/>
        <end position="330"/>
    </location>
</feature>
<feature type="strand" evidence="7">
    <location>
        <begin position="333"/>
        <end position="337"/>
    </location>
</feature>
<feature type="strand" evidence="7">
    <location>
        <begin position="340"/>
        <end position="343"/>
    </location>
</feature>
<feature type="helix" evidence="7">
    <location>
        <begin position="345"/>
        <end position="347"/>
    </location>
</feature>
<feature type="helix" evidence="7">
    <location>
        <begin position="350"/>
        <end position="353"/>
    </location>
</feature>
<protein>
    <recommendedName>
        <fullName>Biglycan</fullName>
    </recommendedName>
    <alternativeName>
        <fullName>Bone/cartilage proteoglycan I</fullName>
    </alternativeName>
    <alternativeName>
        <fullName>Leucine-rich PG I</fullName>
    </alternativeName>
    <alternativeName>
        <fullName>PG-S1</fullName>
    </alternativeName>
</protein>
<reference key="1">
    <citation type="journal article" date="1995" name="Biochem. Mol. Biol. Int.">
        <title>Primary structure of bovine aorta biglycan core protein deduced from cloned cDNA.</title>
        <authorList>
            <person name="Xu J.H."/>
            <person name="Radhakrishnamurthy B."/>
            <person name="Srinivasan S.R."/>
            <person name="Berenson G.S."/>
        </authorList>
    </citation>
    <scope>NUCLEOTIDE SEQUENCE [MRNA]</scope>
    <source>
        <tissue>Aorta</tissue>
    </source>
</reference>
<reference key="2">
    <citation type="journal article" date="2005" name="BMC Genomics">
        <title>Characterization of 954 bovine full-CDS cDNA sequences.</title>
        <authorList>
            <person name="Harhay G.P."/>
            <person name="Sonstegard T.S."/>
            <person name="Keele J.W."/>
            <person name="Heaton M.P."/>
            <person name="Clawson M.L."/>
            <person name="Snelling W.M."/>
            <person name="Wiedmann R.T."/>
            <person name="Van Tassell C.P."/>
            <person name="Smith T.P.L."/>
        </authorList>
    </citation>
    <scope>NUCLEOTIDE SEQUENCE [LARGE SCALE MRNA]</scope>
</reference>
<reference key="3">
    <citation type="submission" date="2006-06" db="EMBL/GenBank/DDBJ databases">
        <authorList>
            <consortium name="NIH - Mammalian Gene Collection (MGC) project"/>
        </authorList>
    </citation>
    <scope>NUCLEOTIDE SEQUENCE [LARGE SCALE MRNA]</scope>
    <source>
        <strain>Hereford</strain>
        <tissue>Fetal lung</tissue>
    </source>
</reference>
<reference key="4">
    <citation type="journal article" date="1989" name="J. Biol. Chem.">
        <title>The primary structure of the core protein of the small, leucine-rich proteoglycan (PG I) from bovine articular cartilage.</title>
        <authorList>
            <person name="Neame P.J."/>
            <person name="Choi H.U."/>
            <person name="Rosenberg L.C."/>
        </authorList>
    </citation>
    <scope>PROTEIN SEQUENCE OF 38-369</scope>
    <scope>GLYCOSYLATION AT SER-42 AND SER-48</scope>
    <source>
        <tissue>Cartilage</tissue>
    </source>
</reference>
<reference key="5">
    <citation type="journal article" date="1989" name="J. Biol. Chem.">
        <title>Characterization of the dermatan sulfate proteoglycans, DS-PGI and DS-PGII, from bovine articular cartilage and skin isolated by octyl-sepharose chromatography.</title>
        <authorList>
            <person name="Choi H.U."/>
            <person name="Johnson T.L."/>
            <person name="Pal S."/>
            <person name="Tang L.H."/>
            <person name="Rosenberg L.C."/>
            <person name="Neame P.J."/>
        </authorList>
    </citation>
    <scope>PROTEIN SEQUENCE OF 38-63</scope>
    <scope>GLYCOSYLATION AT SER-42 AND SER-48</scope>
    <source>
        <tissue>Cartilage</tissue>
    </source>
</reference>
<reference key="6">
    <citation type="journal article" date="2002" name="J. Biol. Chem.">
        <title>Molecular interactions of biglycan and decorin with elastic fiber components: biglycan forms a ternary complex with tropoelastin and microfibril-associated glycoprotein 1.</title>
        <authorList>
            <person name="Reinboth B."/>
            <person name="Hanssen E."/>
            <person name="Cleary E.G."/>
            <person name="Gibson M.A."/>
        </authorList>
    </citation>
    <scope>INTERACTION WITH MFAP2 AND ELN</scope>
</reference>
<reference key="7">
    <citation type="journal article" date="2006" name="J. Biol. Chem.">
        <title>Crystal structure of the biglycan dimer and evidence that dimerization is essential for folding and stability of class I small leucine-rich repeat proteoglycans.</title>
        <authorList>
            <person name="Scott P.G."/>
            <person name="Dodd C.M."/>
            <person name="Bergmann E.M."/>
            <person name="Sheehan J.K."/>
            <person name="Bishop P.N."/>
        </authorList>
    </citation>
    <scope>X-RAY CRYSTALLOGRAPHY (3.4 ANGSTROMS) OF 38-369</scope>
    <scope>DISULFIDE BONDS</scope>
    <scope>SUBUNIT</scope>
    <scope>GLYCOSYLATION AT ASN-312</scope>
</reference>